<reference key="1">
    <citation type="journal article" date="2004" name="Proc. Natl. Acad. Sci. U.S.A.">
        <title>Genome sequence of the enterobacterial phytopathogen Erwinia carotovora subsp. atroseptica and characterization of virulence factors.</title>
        <authorList>
            <person name="Bell K.S."/>
            <person name="Sebaihia M."/>
            <person name="Pritchard L."/>
            <person name="Holden M.T.G."/>
            <person name="Hyman L.J."/>
            <person name="Holeva M.C."/>
            <person name="Thomson N.R."/>
            <person name="Bentley S.D."/>
            <person name="Churcher L.J.C."/>
            <person name="Mungall K."/>
            <person name="Atkin R."/>
            <person name="Bason N."/>
            <person name="Brooks K."/>
            <person name="Chillingworth T."/>
            <person name="Clark K."/>
            <person name="Doggett J."/>
            <person name="Fraser A."/>
            <person name="Hance Z."/>
            <person name="Hauser H."/>
            <person name="Jagels K."/>
            <person name="Moule S."/>
            <person name="Norbertczak H."/>
            <person name="Ormond D."/>
            <person name="Price C."/>
            <person name="Quail M.A."/>
            <person name="Sanders M."/>
            <person name="Walker D."/>
            <person name="Whitehead S."/>
            <person name="Salmond G.P.C."/>
            <person name="Birch P.R.J."/>
            <person name="Parkhill J."/>
            <person name="Toth I.K."/>
        </authorList>
    </citation>
    <scope>NUCLEOTIDE SEQUENCE [LARGE SCALE GENOMIC DNA]</scope>
    <source>
        <strain>SCRI 1043 / ATCC BAA-672</strain>
    </source>
</reference>
<accession>Q6D7L6</accession>
<gene>
    <name evidence="1" type="primary">leuS</name>
    <name type="ordered locus">ECA1309</name>
</gene>
<evidence type="ECO:0000255" key="1">
    <source>
        <dbReference type="HAMAP-Rule" id="MF_00049"/>
    </source>
</evidence>
<organism>
    <name type="scientific">Pectobacterium atrosepticum (strain SCRI 1043 / ATCC BAA-672)</name>
    <name type="common">Erwinia carotovora subsp. atroseptica</name>
    <dbReference type="NCBI Taxonomy" id="218491"/>
    <lineage>
        <taxon>Bacteria</taxon>
        <taxon>Pseudomonadati</taxon>
        <taxon>Pseudomonadota</taxon>
        <taxon>Gammaproteobacteria</taxon>
        <taxon>Enterobacterales</taxon>
        <taxon>Pectobacteriaceae</taxon>
        <taxon>Pectobacterium</taxon>
    </lineage>
</organism>
<sequence>MQEQYRPEEIEADVQLHWQEKQTFKVTEQLGKEKYYCLSMLPYPSGRLHMGHVRNYTIGDVISRYQRMLGKNVLQPIGWDAFGLPAEGAAVKNNTAPAPWTYANIDYMKNQLKLLGFGYDWDREIATCKPDYYRWEQWFFTKLYEKGLVYKKTSAVNWCPNDQTVLANEQVIDGCCWRCDTKVERKEIPQWFIKITAYADQLLNDLDTLESWPEQVKTMQRNWIGRSEGVEITFDVADSEEKLSVYTTRPDTFMGVTYVAVAAGHPLAAQAAVTNPALADFIAECRNTKVAEADMATMEKKGMATGLYAIHPLNGEKVAIWVANFVLMEYGTGAVMAVPGHDQRDWEFATKYDLSIKPVILNADGSEPDLSAQAMTEKGSLFNSGEFDGLDFEAGFNAIADKLVEKGIGERKVNYRLRDWGVSRQRYWGAPIPMMTLEDGTVIPTPEDQLPVILPEDVVMDGITSPLKSNPEWAKTTVNGQPALRETDTFDTFMESSWYYARYTCPQYDQGMLDPAAANYWLPVDQYVGGIEHAIMHLMYFRFFHKLMRDAGLVTSDEPAKRLLCQGMVLADAFYYLGNNGERIWVSPTDVTVERDEKGRIVKATDNEGRDVVYAGMSKMSKSKNNGIDPQIMVEKYGADTVRLFMMFASPAEMTLEWQESGVEGANRFLKRVWRQAFEHTGKGAVTALDITTLTEDQKSLRRDLHKTIAKVTDDIGRRQTFNTAIAAIMELMNKLAKAPQESDQDRALTQETLLAVVRMLYPFTPHVCFTLWQALQGEGDVDTAPWPVADENAMVEDSKLVVVQVNGKVRGKITVAADASEEQVRERAAQEPLVAKYLDGVTVRKVIYVPGKLLNLVVG</sequence>
<feature type="chain" id="PRO_0000152016" description="Leucine--tRNA ligase">
    <location>
        <begin position="1"/>
        <end position="860"/>
    </location>
</feature>
<feature type="short sequence motif" description="'HIGH' region">
    <location>
        <begin position="42"/>
        <end position="52"/>
    </location>
</feature>
<feature type="short sequence motif" description="'KMSKS' region">
    <location>
        <begin position="619"/>
        <end position="623"/>
    </location>
</feature>
<feature type="binding site" evidence="1">
    <location>
        <position position="622"/>
    </location>
    <ligand>
        <name>ATP</name>
        <dbReference type="ChEBI" id="CHEBI:30616"/>
    </ligand>
</feature>
<dbReference type="EC" id="6.1.1.4" evidence="1"/>
<dbReference type="EMBL" id="BX950851">
    <property type="protein sequence ID" value="CAG74219.1"/>
    <property type="molecule type" value="Genomic_DNA"/>
</dbReference>
<dbReference type="RefSeq" id="WP_011092895.1">
    <property type="nucleotide sequence ID" value="NC_004547.2"/>
</dbReference>
<dbReference type="SMR" id="Q6D7L6"/>
<dbReference type="STRING" id="218491.ECA1309"/>
<dbReference type="KEGG" id="eca:ECA1309"/>
<dbReference type="PATRIC" id="fig|218491.5.peg.1335"/>
<dbReference type="eggNOG" id="COG0495">
    <property type="taxonomic scope" value="Bacteria"/>
</dbReference>
<dbReference type="HOGENOM" id="CLU_004427_0_0_6"/>
<dbReference type="OrthoDB" id="9810365at2"/>
<dbReference type="Proteomes" id="UP000007966">
    <property type="component" value="Chromosome"/>
</dbReference>
<dbReference type="GO" id="GO:0005829">
    <property type="term" value="C:cytosol"/>
    <property type="evidence" value="ECO:0007669"/>
    <property type="project" value="TreeGrafter"/>
</dbReference>
<dbReference type="GO" id="GO:0002161">
    <property type="term" value="F:aminoacyl-tRNA deacylase activity"/>
    <property type="evidence" value="ECO:0007669"/>
    <property type="project" value="InterPro"/>
</dbReference>
<dbReference type="GO" id="GO:0005524">
    <property type="term" value="F:ATP binding"/>
    <property type="evidence" value="ECO:0007669"/>
    <property type="project" value="UniProtKB-UniRule"/>
</dbReference>
<dbReference type="GO" id="GO:0004823">
    <property type="term" value="F:leucine-tRNA ligase activity"/>
    <property type="evidence" value="ECO:0007669"/>
    <property type="project" value="UniProtKB-UniRule"/>
</dbReference>
<dbReference type="GO" id="GO:0006429">
    <property type="term" value="P:leucyl-tRNA aminoacylation"/>
    <property type="evidence" value="ECO:0007669"/>
    <property type="project" value="UniProtKB-UniRule"/>
</dbReference>
<dbReference type="CDD" id="cd07958">
    <property type="entry name" value="Anticodon_Ia_Leu_BEm"/>
    <property type="match status" value="1"/>
</dbReference>
<dbReference type="CDD" id="cd00812">
    <property type="entry name" value="LeuRS_core"/>
    <property type="match status" value="1"/>
</dbReference>
<dbReference type="FunFam" id="1.10.730.10:FF:000002">
    <property type="entry name" value="Leucine--tRNA ligase"/>
    <property type="match status" value="1"/>
</dbReference>
<dbReference type="FunFam" id="2.20.28.290:FF:000001">
    <property type="entry name" value="Leucine--tRNA ligase"/>
    <property type="match status" value="1"/>
</dbReference>
<dbReference type="FunFam" id="3.10.20.590:FF:000001">
    <property type="entry name" value="Leucine--tRNA ligase"/>
    <property type="match status" value="1"/>
</dbReference>
<dbReference type="FunFam" id="3.40.50.620:FF:000003">
    <property type="entry name" value="Leucine--tRNA ligase"/>
    <property type="match status" value="1"/>
</dbReference>
<dbReference type="FunFam" id="3.40.50.620:FF:000124">
    <property type="entry name" value="Leucine--tRNA ligase"/>
    <property type="match status" value="1"/>
</dbReference>
<dbReference type="FunFam" id="3.90.740.10:FF:000012">
    <property type="entry name" value="Leucine--tRNA ligase"/>
    <property type="match status" value="1"/>
</dbReference>
<dbReference type="Gene3D" id="2.20.28.290">
    <property type="match status" value="1"/>
</dbReference>
<dbReference type="Gene3D" id="3.10.20.590">
    <property type="match status" value="1"/>
</dbReference>
<dbReference type="Gene3D" id="3.40.50.620">
    <property type="entry name" value="HUPs"/>
    <property type="match status" value="2"/>
</dbReference>
<dbReference type="Gene3D" id="1.10.730.10">
    <property type="entry name" value="Isoleucyl-tRNA Synthetase, Domain 1"/>
    <property type="match status" value="1"/>
</dbReference>
<dbReference type="Gene3D" id="3.90.740.10">
    <property type="entry name" value="Valyl/Leucyl/Isoleucyl-tRNA synthetase, editing domain"/>
    <property type="match status" value="1"/>
</dbReference>
<dbReference type="HAMAP" id="MF_00049_B">
    <property type="entry name" value="Leu_tRNA_synth_B"/>
    <property type="match status" value="1"/>
</dbReference>
<dbReference type="InterPro" id="IPR001412">
    <property type="entry name" value="aa-tRNA-synth_I_CS"/>
</dbReference>
<dbReference type="InterPro" id="IPR002300">
    <property type="entry name" value="aa-tRNA-synth_Ia"/>
</dbReference>
<dbReference type="InterPro" id="IPR002302">
    <property type="entry name" value="Leu-tRNA-ligase"/>
</dbReference>
<dbReference type="InterPro" id="IPR025709">
    <property type="entry name" value="Leu_tRNA-synth_edit"/>
</dbReference>
<dbReference type="InterPro" id="IPR013155">
    <property type="entry name" value="M/V/L/I-tRNA-synth_anticd-bd"/>
</dbReference>
<dbReference type="InterPro" id="IPR015413">
    <property type="entry name" value="Methionyl/Leucyl_tRNA_Synth"/>
</dbReference>
<dbReference type="InterPro" id="IPR014729">
    <property type="entry name" value="Rossmann-like_a/b/a_fold"/>
</dbReference>
<dbReference type="InterPro" id="IPR009080">
    <property type="entry name" value="tRNAsynth_Ia_anticodon-bd"/>
</dbReference>
<dbReference type="InterPro" id="IPR009008">
    <property type="entry name" value="Val/Leu/Ile-tRNA-synth_edit"/>
</dbReference>
<dbReference type="NCBIfam" id="TIGR00396">
    <property type="entry name" value="leuS_bact"/>
    <property type="match status" value="1"/>
</dbReference>
<dbReference type="PANTHER" id="PTHR43740:SF2">
    <property type="entry name" value="LEUCINE--TRNA LIGASE, MITOCHONDRIAL"/>
    <property type="match status" value="1"/>
</dbReference>
<dbReference type="PANTHER" id="PTHR43740">
    <property type="entry name" value="LEUCYL-TRNA SYNTHETASE"/>
    <property type="match status" value="1"/>
</dbReference>
<dbReference type="Pfam" id="PF08264">
    <property type="entry name" value="Anticodon_1"/>
    <property type="match status" value="1"/>
</dbReference>
<dbReference type="Pfam" id="PF00133">
    <property type="entry name" value="tRNA-synt_1"/>
    <property type="match status" value="2"/>
</dbReference>
<dbReference type="Pfam" id="PF13603">
    <property type="entry name" value="tRNA-synt_1_2"/>
    <property type="match status" value="1"/>
</dbReference>
<dbReference type="Pfam" id="PF09334">
    <property type="entry name" value="tRNA-synt_1g"/>
    <property type="match status" value="1"/>
</dbReference>
<dbReference type="PRINTS" id="PR00985">
    <property type="entry name" value="TRNASYNTHLEU"/>
</dbReference>
<dbReference type="SUPFAM" id="SSF47323">
    <property type="entry name" value="Anticodon-binding domain of a subclass of class I aminoacyl-tRNA synthetases"/>
    <property type="match status" value="1"/>
</dbReference>
<dbReference type="SUPFAM" id="SSF52374">
    <property type="entry name" value="Nucleotidylyl transferase"/>
    <property type="match status" value="1"/>
</dbReference>
<dbReference type="SUPFAM" id="SSF50677">
    <property type="entry name" value="ValRS/IleRS/LeuRS editing domain"/>
    <property type="match status" value="1"/>
</dbReference>
<dbReference type="PROSITE" id="PS00178">
    <property type="entry name" value="AA_TRNA_LIGASE_I"/>
    <property type="match status" value="1"/>
</dbReference>
<keyword id="KW-0030">Aminoacyl-tRNA synthetase</keyword>
<keyword id="KW-0067">ATP-binding</keyword>
<keyword id="KW-0963">Cytoplasm</keyword>
<keyword id="KW-0436">Ligase</keyword>
<keyword id="KW-0547">Nucleotide-binding</keyword>
<keyword id="KW-0648">Protein biosynthesis</keyword>
<keyword id="KW-1185">Reference proteome</keyword>
<comment type="catalytic activity">
    <reaction evidence="1">
        <text>tRNA(Leu) + L-leucine + ATP = L-leucyl-tRNA(Leu) + AMP + diphosphate</text>
        <dbReference type="Rhea" id="RHEA:11688"/>
        <dbReference type="Rhea" id="RHEA-COMP:9613"/>
        <dbReference type="Rhea" id="RHEA-COMP:9622"/>
        <dbReference type="ChEBI" id="CHEBI:30616"/>
        <dbReference type="ChEBI" id="CHEBI:33019"/>
        <dbReference type="ChEBI" id="CHEBI:57427"/>
        <dbReference type="ChEBI" id="CHEBI:78442"/>
        <dbReference type="ChEBI" id="CHEBI:78494"/>
        <dbReference type="ChEBI" id="CHEBI:456215"/>
        <dbReference type="EC" id="6.1.1.4"/>
    </reaction>
</comment>
<comment type="subcellular location">
    <subcellularLocation>
        <location evidence="1">Cytoplasm</location>
    </subcellularLocation>
</comment>
<comment type="similarity">
    <text evidence="1">Belongs to the class-I aminoacyl-tRNA synthetase family.</text>
</comment>
<name>SYL_PECAS</name>
<proteinExistence type="inferred from homology"/>
<protein>
    <recommendedName>
        <fullName evidence="1">Leucine--tRNA ligase</fullName>
        <ecNumber evidence="1">6.1.1.4</ecNumber>
    </recommendedName>
    <alternativeName>
        <fullName evidence="1">Leucyl-tRNA synthetase</fullName>
        <shortName evidence="1">LeuRS</shortName>
    </alternativeName>
</protein>